<dbReference type="EMBL" id="X51586">
    <property type="protein sequence ID" value="CAA35936.1"/>
    <property type="molecule type" value="Genomic_DNA"/>
</dbReference>
<dbReference type="PIR" id="S09261">
    <property type="entry name" value="S09261"/>
</dbReference>
<dbReference type="SMR" id="P16942"/>
<dbReference type="STRING" id="216599.GCA_000283715_05160"/>
<dbReference type="PATRIC" id="fig|624.635.peg.5081"/>
<dbReference type="GO" id="GO:0003677">
    <property type="term" value="F:DNA binding"/>
    <property type="evidence" value="ECO:0007669"/>
    <property type="project" value="UniProtKB-KW"/>
</dbReference>
<dbReference type="GO" id="GO:0015074">
    <property type="term" value="P:DNA integration"/>
    <property type="evidence" value="ECO:0007669"/>
    <property type="project" value="InterPro"/>
</dbReference>
<dbReference type="GO" id="GO:0006310">
    <property type="term" value="P:DNA recombination"/>
    <property type="evidence" value="ECO:0007669"/>
    <property type="project" value="UniProtKB-KW"/>
</dbReference>
<dbReference type="GO" id="GO:0032196">
    <property type="term" value="P:transposition"/>
    <property type="evidence" value="ECO:0007669"/>
    <property type="project" value="UniProtKB-KW"/>
</dbReference>
<dbReference type="Gene3D" id="3.30.420.10">
    <property type="entry name" value="Ribonuclease H-like superfamily/Ribonuclease H"/>
    <property type="match status" value="1"/>
</dbReference>
<dbReference type="InterPro" id="IPR025948">
    <property type="entry name" value="HTH-like_dom"/>
</dbReference>
<dbReference type="InterPro" id="IPR001584">
    <property type="entry name" value="Integrase_cat-core"/>
</dbReference>
<dbReference type="InterPro" id="IPR012337">
    <property type="entry name" value="RNaseH-like_sf"/>
</dbReference>
<dbReference type="InterPro" id="IPR036397">
    <property type="entry name" value="RNaseH_sf"/>
</dbReference>
<dbReference type="InterPro" id="IPR048020">
    <property type="entry name" value="Transpos_IS3"/>
</dbReference>
<dbReference type="InterPro" id="IPR050900">
    <property type="entry name" value="Transposase_IS3/IS150/IS904"/>
</dbReference>
<dbReference type="NCBIfam" id="NF033516">
    <property type="entry name" value="transpos_IS3"/>
    <property type="match status" value="1"/>
</dbReference>
<dbReference type="PANTHER" id="PTHR46889">
    <property type="entry name" value="TRANSPOSASE INSF FOR INSERTION SEQUENCE IS3B-RELATED"/>
    <property type="match status" value="1"/>
</dbReference>
<dbReference type="PANTHER" id="PTHR46889:SF4">
    <property type="entry name" value="TRANSPOSASE INSO FOR INSERTION SEQUENCE ELEMENT IS911B-RELATED"/>
    <property type="match status" value="1"/>
</dbReference>
<dbReference type="Pfam" id="PF13276">
    <property type="entry name" value="HTH_21"/>
    <property type="match status" value="1"/>
</dbReference>
<dbReference type="Pfam" id="PF00665">
    <property type="entry name" value="rve"/>
    <property type="match status" value="1"/>
</dbReference>
<dbReference type="Pfam" id="PF13333">
    <property type="entry name" value="rve_2"/>
    <property type="match status" value="1"/>
</dbReference>
<dbReference type="SUPFAM" id="SSF53098">
    <property type="entry name" value="Ribonuclease H-like"/>
    <property type="match status" value="1"/>
</dbReference>
<dbReference type="PROSITE" id="PS50994">
    <property type="entry name" value="INTEGRASE"/>
    <property type="match status" value="1"/>
</dbReference>
<feature type="chain" id="PRO_0000075444" description="Transposase for insertion sequence element IS629">
    <location>
        <begin position="1"/>
        <end position="296"/>
    </location>
</feature>
<feature type="domain" description="Integrase catalytic" evidence="1">
    <location>
        <begin position="125"/>
        <end position="285"/>
    </location>
</feature>
<accession>P16942</accession>
<comment type="function">
    <text>Involved in the transposition of the insertion sequence.</text>
</comment>
<reference key="1">
    <citation type="journal article" date="1990" name="Nucleic Acids Res.">
        <title>Complete sequence of IS629.</title>
        <authorList>
            <person name="Matsutani S."/>
            <person name="Ohtsubo E."/>
        </authorList>
    </citation>
    <scope>NUCLEOTIDE SEQUENCE [GENOMIC DNA]</scope>
</reference>
<reference key="2">
    <citation type="journal article" date="1987" name="J. Mol. Biol.">
        <title>Isolation and characterization of IS elements repeated in the bacterial chromosome.</title>
        <authorList>
            <person name="Matsutani S."/>
            <person name="Ohtsubo H."/>
            <person name="Maeda Y."/>
            <person name="Ohtsubo E."/>
        </authorList>
    </citation>
    <scope>NUCLEOTIDE SEQUENCE [GENOMIC DNA]</scope>
</reference>
<evidence type="ECO:0000255" key="1">
    <source>
        <dbReference type="PROSITE-ProRule" id="PRU00457"/>
    </source>
</evidence>
<organism>
    <name type="scientific">Shigella sonnei</name>
    <dbReference type="NCBI Taxonomy" id="624"/>
    <lineage>
        <taxon>Bacteria</taxon>
        <taxon>Pseudomonadati</taxon>
        <taxon>Pseudomonadota</taxon>
        <taxon>Gammaproteobacteria</taxon>
        <taxon>Enterobacterales</taxon>
        <taxon>Enterobacteriaceae</taxon>
        <taxon>Shigella</taxon>
    </lineage>
</organism>
<keyword id="KW-0233">DNA recombination</keyword>
<keyword id="KW-0238">DNA-binding</keyword>
<keyword id="KW-0814">Transposable element</keyword>
<keyword id="KW-0815">Transposition</keyword>
<proteinExistence type="predicted"/>
<sequence length="296" mass="33780">MMPLLDKLREQYGVGPLCSELHIAPSTYYHCQQQRHHPDKRSARAQRDDWLKKEIQRVYDENHKVYGVRKVWRQLLREGIRVARCTVARLMAVMGLAGVLRGKKVRTTISRKAVAAGDRVNRQFVAERPDQLWVADFTYVSTWQGFVYVAFIIDVFAGYIVGWRVSSSMETTFVLDALEQALWARRPSGTVHHSDKGSQYVSLAYTQRLKEAGLLASTGSTGDSYDNAMAESINGLYKAKVIHRKSWKNRAEVELATLTWVDWYNNRRLLERLGHTPPAEAEKAYYASIGNDDLAA</sequence>
<name>T629_SHISO</name>
<protein>
    <recommendedName>
        <fullName>Transposase for insertion sequence element IS629</fullName>
    </recommendedName>
</protein>